<evidence type="ECO:0000250" key="1"/>
<evidence type="ECO:0000250" key="2">
    <source>
        <dbReference type="UniProtKB" id="P10636"/>
    </source>
</evidence>
<evidence type="ECO:0000250" key="3">
    <source>
        <dbReference type="UniProtKB" id="P10637"/>
    </source>
</evidence>
<evidence type="ECO:0000250" key="4">
    <source>
        <dbReference type="UniProtKB" id="P19332"/>
    </source>
</evidence>
<evidence type="ECO:0000255" key="5">
    <source>
        <dbReference type="PROSITE-ProRule" id="PRU00824"/>
    </source>
</evidence>
<evidence type="ECO:0000256" key="6">
    <source>
        <dbReference type="SAM" id="MobiDB-lite"/>
    </source>
</evidence>
<proteinExistence type="inferred from homology"/>
<keyword id="KW-0007">Acetylation</keyword>
<keyword id="KW-1003">Cell membrane</keyword>
<keyword id="KW-0966">Cell projection</keyword>
<keyword id="KW-0963">Cytoplasm</keyword>
<keyword id="KW-0206">Cytoskeleton</keyword>
<keyword id="KW-1017">Isopeptide bond</keyword>
<keyword id="KW-0472">Membrane</keyword>
<keyword id="KW-0488">Methylation</keyword>
<keyword id="KW-0493">Microtubule</keyword>
<keyword id="KW-0597">Phosphoprotein</keyword>
<keyword id="KW-1185">Reference proteome</keyword>
<keyword id="KW-0677">Repeat</keyword>
<keyword id="KW-0832">Ubl conjugation</keyword>
<reference key="1">
    <citation type="journal article" date="2004" name="Gene">
        <title>Tau gene (MAPT) sequence variation among primates.</title>
        <authorList>
            <person name="Holzer M."/>
            <person name="Craxton M."/>
            <person name="Jakes R."/>
            <person name="Arendt T."/>
            <person name="Goedert M."/>
        </authorList>
    </citation>
    <scope>NUCLEOTIDE SEQUENCE [GENOMIC DNA]</scope>
</reference>
<protein>
    <recommendedName>
        <fullName>Microtubule-associated protein tau</fullName>
    </recommendedName>
</protein>
<name>TAU_GORGO</name>
<feature type="initiator methionine" description="Removed" evidence="2">
    <location>
        <position position="1"/>
    </location>
</feature>
<feature type="chain" id="PRO_0000072738" description="Microtubule-associated protein tau">
    <location>
        <begin position="2"/>
        <end position="776"/>
    </location>
</feature>
<feature type="repeat" description="Tau/MAP 1" evidence="5">
    <location>
        <begin position="579"/>
        <end position="609"/>
    </location>
</feature>
<feature type="repeat" description="Tau/MAP 2" evidence="5">
    <location>
        <begin position="610"/>
        <end position="640"/>
    </location>
</feature>
<feature type="repeat" description="Tau/MAP 3" evidence="5">
    <location>
        <begin position="641"/>
        <end position="671"/>
    </location>
</feature>
<feature type="repeat" description="Tau/MAP 4" evidence="5">
    <location>
        <begin position="672"/>
        <end position="703"/>
    </location>
</feature>
<feature type="region of interest" description="Disordered" evidence="6">
    <location>
        <begin position="1"/>
        <end position="263"/>
    </location>
</feature>
<feature type="region of interest" description="Disordered" evidence="6">
    <location>
        <begin position="276"/>
        <end position="591"/>
    </location>
</feature>
<feature type="region of interest" description="Disordered" evidence="6">
    <location>
        <begin position="733"/>
        <end position="752"/>
    </location>
</feature>
<feature type="compositionally biased region" description="Basic and acidic residues" evidence="6">
    <location>
        <begin position="1"/>
        <end position="26"/>
    </location>
</feature>
<feature type="compositionally biased region" description="Polar residues" evidence="6">
    <location>
        <begin position="61"/>
        <end position="71"/>
    </location>
</feature>
<feature type="compositionally biased region" description="Basic and acidic residues" evidence="6">
    <location>
        <begin position="179"/>
        <end position="189"/>
    </location>
</feature>
<feature type="compositionally biased region" description="Basic and acidic residues" evidence="6">
    <location>
        <begin position="207"/>
        <end position="216"/>
    </location>
</feature>
<feature type="compositionally biased region" description="Acidic residues" evidence="6">
    <location>
        <begin position="217"/>
        <end position="228"/>
    </location>
</feature>
<feature type="compositionally biased region" description="Basic and acidic residues" evidence="6">
    <location>
        <begin position="314"/>
        <end position="323"/>
    </location>
</feature>
<feature type="compositionally biased region" description="Low complexity" evidence="6">
    <location>
        <begin position="324"/>
        <end position="340"/>
    </location>
</feature>
<feature type="compositionally biased region" description="Basic and acidic residues" evidence="6">
    <location>
        <begin position="344"/>
        <end position="356"/>
    </location>
</feature>
<feature type="compositionally biased region" description="Basic and acidic residues" evidence="6">
    <location>
        <begin position="381"/>
        <end position="393"/>
    </location>
</feature>
<feature type="compositionally biased region" description="Polar residues" evidence="6">
    <location>
        <begin position="440"/>
        <end position="452"/>
    </location>
</feature>
<feature type="compositionally biased region" description="Basic and acidic residues" evidence="6">
    <location>
        <begin position="455"/>
        <end position="466"/>
    </location>
</feature>
<feature type="compositionally biased region" description="Basic and acidic residues" evidence="6">
    <location>
        <begin position="517"/>
        <end position="528"/>
    </location>
</feature>
<feature type="compositionally biased region" description="Low complexity" evidence="6">
    <location>
        <begin position="529"/>
        <end position="549"/>
    </location>
</feature>
<feature type="compositionally biased region" description="Polar residues" evidence="6">
    <location>
        <begin position="736"/>
        <end position="751"/>
    </location>
</feature>
<feature type="modified residue" description="N-acetylalanine" evidence="2">
    <location>
        <position position="2"/>
    </location>
</feature>
<feature type="modified residue" description="Phosphotyrosine" evidence="2">
    <location>
        <position position="18"/>
    </location>
</feature>
<feature type="modified residue" description="Phosphotyrosine" evidence="3">
    <location>
        <position position="29"/>
    </location>
</feature>
<feature type="modified residue" description="Phosphoserine" evidence="4">
    <location>
        <position position="46"/>
    </location>
</feature>
<feature type="modified residue" description="Phosphoserine" evidence="4">
    <location>
        <position position="61"/>
    </location>
</feature>
<feature type="modified residue" description="Phosphothreonine" evidence="3">
    <location>
        <position position="69"/>
    </location>
</feature>
<feature type="modified residue" description="Phosphothreonine" evidence="4">
    <location>
        <position position="71"/>
    </location>
</feature>
<feature type="modified residue" description="Phosphothreonine" evidence="3">
    <location>
        <position position="111"/>
    </location>
</feature>
<feature type="modified residue" description="Phosphoserine" evidence="2">
    <location>
        <position position="214"/>
    </location>
</feature>
<feature type="modified residue" description="Phosphothreonine" evidence="2">
    <location>
        <position position="470"/>
    </location>
</feature>
<feature type="modified residue" description="Omega-N-methylarginine" evidence="3">
    <location>
        <position position="472"/>
    </location>
</feature>
<feature type="modified residue" description="N6,N6-dimethyllysine; alternate" evidence="3">
    <location>
        <position position="480"/>
    </location>
</feature>
<feature type="modified residue" description="N6-acetyllysine; alternate" evidence="3">
    <location>
        <position position="480"/>
    </location>
</feature>
<feature type="modified residue" description="Phosphothreonine" evidence="3">
    <location>
        <position position="486"/>
    </location>
</feature>
<feature type="modified residue" description="Phosphothreonine" evidence="3">
    <location>
        <position position="492"/>
    </location>
</feature>
<feature type="modified residue" description="Phosphothreonine" evidence="2">
    <location>
        <position position="498"/>
    </location>
</feature>
<feature type="modified residue" description="Phosphoserine" evidence="3">
    <location>
        <position position="502"/>
    </location>
</feature>
<feature type="modified residue" description="Phosphoserine" evidence="3">
    <location>
        <position position="526"/>
    </location>
</feature>
<feature type="modified residue" description="Phosphoserine" evidence="3">
    <location>
        <position position="530"/>
    </location>
</feature>
<feature type="modified residue" description="Phosphotyrosine" evidence="2">
    <location>
        <position position="532"/>
    </location>
</feature>
<feature type="modified residue" description="Phosphoserine" evidence="2">
    <location>
        <position position="533"/>
    </location>
</feature>
<feature type="modified residue" description="Phosphoserine" evidence="2">
    <location>
        <position position="534"/>
    </location>
</feature>
<feature type="modified residue" description="Phosphoserine" evidence="2">
    <location>
        <position position="537"/>
    </location>
</feature>
<feature type="modified residue" description="Phosphothreonine" evidence="2">
    <location>
        <position position="540"/>
    </location>
</feature>
<feature type="modified residue" description="Phosphothreonine" evidence="2">
    <location>
        <position position="547"/>
    </location>
</feature>
<feature type="modified residue" description="Phosphoserine" evidence="2">
    <location>
        <position position="549"/>
    </location>
</feature>
<feature type="modified residue" description="Phosphothreonine" evidence="2">
    <location>
        <position position="552"/>
    </location>
</feature>
<feature type="modified residue" description="N6-acetyllysine" evidence="3">
    <location>
        <position position="560"/>
    </location>
</feature>
<feature type="modified residue" description="Phosphothreonine" evidence="2">
    <location>
        <position position="566"/>
    </location>
</feature>
<feature type="modified residue" description="Phosphoserine" evidence="2">
    <location>
        <position position="570"/>
    </location>
</feature>
<feature type="modified residue" description="Phosphoserine" evidence="2">
    <location>
        <position position="572"/>
    </location>
</feature>
<feature type="modified residue" description="N6-acetyllysine; alternate" evidence="3">
    <location>
        <position position="594"/>
    </location>
</feature>
<feature type="modified residue" description="N6-methyllysine; alternate" evidence="3">
    <location>
        <position position="594"/>
    </location>
</feature>
<feature type="modified residue" description="Phosphoserine" evidence="2">
    <location>
        <position position="597"/>
    </location>
</feature>
<feature type="modified residue" description="N6-acetyllysine; alternate" evidence="3">
    <location>
        <position position="616"/>
    </location>
</feature>
<feature type="modified residue" description="Phosphoserine" evidence="2">
    <location>
        <position position="620"/>
    </location>
</feature>
<feature type="modified residue" description="Phosphoserine" evidence="2">
    <location>
        <position position="624"/>
    </location>
</feature>
<feature type="modified residue" description="N6-acetyllysine" evidence="3">
    <location>
        <position position="625"/>
    </location>
</feature>
<feature type="modified residue" description="Phosphoserine" evidence="2">
    <location>
        <position position="628"/>
    </location>
</feature>
<feature type="modified residue" description="N6-acetyllysine; alternate" evidence="3">
    <location>
        <position position="633"/>
    </location>
</feature>
<feature type="modified residue" description="Phosphoserine" evidence="2">
    <location>
        <position position="640"/>
    </location>
</feature>
<feature type="modified residue" description="N6,N6-dimethyllysine; alternate" evidence="3">
    <location>
        <position position="646"/>
    </location>
</feature>
<feature type="modified residue" description="N6-acetyllysine; alternate" evidence="3">
    <location>
        <position position="646"/>
    </location>
</feature>
<feature type="modified residue" description="N6-acetyllysine; alternate" evidence="3">
    <location>
        <position position="652"/>
    </location>
</feature>
<feature type="modified residue" description="N6-acetyllysine; alternate" evidence="3">
    <location>
        <position position="656"/>
    </location>
</feature>
<feature type="modified residue" description="Phosphoserine" evidence="2">
    <location>
        <position position="659"/>
    </location>
</feature>
<feature type="modified residue" description="N6-acetyllysine; alternate" evidence="3">
    <location>
        <position position="666"/>
    </location>
</feature>
<feature type="modified residue" description="N6-acetyllysine; alternate" evidence="3">
    <location>
        <position position="678"/>
    </location>
</feature>
<feature type="modified residue" description="N6-acetyllysine; alternate" evidence="3">
    <location>
        <position position="682"/>
    </location>
</feature>
<feature type="modified residue" description="Omega-N-methylarginine" evidence="3">
    <location>
        <position position="684"/>
    </location>
</feature>
<feature type="modified residue" description="Phosphoserine" evidence="2">
    <location>
        <position position="687"/>
    </location>
</feature>
<feature type="modified residue" description="Phosphoserine" evidence="2">
    <location>
        <position position="691"/>
    </location>
</feature>
<feature type="modified residue" description="N6-acetyllysine; alternate" evidence="3">
    <location>
        <position position="704"/>
    </location>
</feature>
<feature type="modified residue" description="N6-acetyllysine; alternate" evidence="3">
    <location>
        <position position="720"/>
    </location>
</feature>
<feature type="modified residue" description="Phosphotyrosine" evidence="3">
    <location>
        <position position="729"/>
    </location>
</feature>
<feature type="modified residue" description="Phosphoserine" evidence="2">
    <location>
        <position position="731"/>
    </location>
</feature>
<feature type="modified residue" description="Phosphoserine" evidence="2">
    <location>
        <position position="735"/>
    </location>
</feature>
<feature type="modified residue" description="Phosphothreonine" evidence="3">
    <location>
        <position position="738"/>
    </location>
</feature>
<feature type="modified residue" description="Phosphoserine" evidence="2">
    <location>
        <position position="739"/>
    </location>
</feature>
<feature type="modified residue" description="Phosphoserine" evidence="2">
    <location>
        <position position="744"/>
    </location>
</feature>
<feature type="modified residue" description="Phosphoserine" evidence="2">
    <location>
        <position position="751"/>
    </location>
</feature>
<feature type="modified residue" description="Phosphoserine" evidence="2">
    <location>
        <position position="757"/>
    </location>
</feature>
<feature type="modified residue" description="Phosphothreonine" evidence="2">
    <location>
        <position position="762"/>
    </location>
</feature>
<feature type="cross-link" description="Glycyl lysine isopeptide (Lys-Gly) (interchain with G-Cter in ubiquitin)" evidence="3">
    <location>
        <position position="44"/>
    </location>
</feature>
<feature type="cross-link" description="Glycyl lysine isopeptide (Lys-Gly) (interchain with G-Cter in ubiquitin)" evidence="2">
    <location>
        <position position="589"/>
    </location>
</feature>
<feature type="cross-link" description="Glycyl lysine isopeptide (Lys-Gly) (interchain with G-Cter in ubiquitin); alternate" evidence="3">
    <location>
        <position position="594"/>
    </location>
</feature>
<feature type="cross-link" description="Glycyl lysine isopeptide (Lys-Gly) (interchain with G-Cter in ubiquitin)" evidence="3">
    <location>
        <position position="602"/>
    </location>
</feature>
<feature type="cross-link" description="Glycyl lysine isopeptide (Lys-Gly) (interchain with G-Cter in ubiquitin); alternate" evidence="3">
    <location>
        <position position="616"/>
    </location>
</feature>
<feature type="cross-link" description="Glycyl lysine isopeptide (Lys-Gly) (interchain with G-Cter in ubiquitin); alternate" evidence="3">
    <location>
        <position position="633"/>
    </location>
</feature>
<feature type="cross-link" description="Glycyl lysine isopeptide (Lys-Gly) (interchain with G-Cter in ubiquitin); alternate" evidence="2">
    <location>
        <position position="646"/>
    </location>
</feature>
<feature type="cross-link" description="Glycyl lysine isopeptide (Lys-Gly) (interchain with G-Cter in ubiquitin); alternate" evidence="3">
    <location>
        <position position="652"/>
    </location>
</feature>
<feature type="cross-link" description="Glycyl lysine isopeptide (Lys-Gly) (interchain with G-Cter in ubiquitin); alternate" evidence="3">
    <location>
        <position position="656"/>
    </location>
</feature>
<feature type="cross-link" description="Glycyl lysine isopeptide (Lys-Gly) (interchain with G-Cter in ubiquitin); alternate" evidence="3">
    <location>
        <position position="666"/>
    </location>
</feature>
<feature type="cross-link" description="Glycyl lysine isopeptide (Lys-Gly) (interchain with G-Cter in ubiquitin); alternate" evidence="3">
    <location>
        <position position="678"/>
    </location>
</feature>
<feature type="cross-link" description="Glycyl lysine isopeptide (Lys-Gly) (interchain with G-Cter in ubiquitin); alternate" evidence="3">
    <location>
        <position position="682"/>
    </location>
</feature>
<feature type="cross-link" description="Glycyl lysine isopeptide (Lys-Gly) (interchain with G-Cter in ubiquitin)" evidence="2">
    <location>
        <position position="688"/>
    </location>
</feature>
<feature type="cross-link" description="Glycyl lysine isopeptide (Lys-Gly) (interchain with G-Cter in ubiquitin); alternate" evidence="3">
    <location>
        <position position="704"/>
    </location>
</feature>
<feature type="cross-link" description="Glycyl lysine isopeptide (Lys-Gly) (interchain with G-Cter in ubiquitin)" evidence="3">
    <location>
        <position position="710"/>
    </location>
</feature>
<feature type="cross-link" description="Glycyl lysine isopeptide (Lys-Gly) (interchain with G-Cter in ubiquitin); alternate" evidence="3">
    <location>
        <position position="720"/>
    </location>
</feature>
<gene>
    <name type="primary">MAPT</name>
</gene>
<organism>
    <name type="scientific">Gorilla gorilla gorilla</name>
    <name type="common">Western lowland gorilla</name>
    <dbReference type="NCBI Taxonomy" id="9595"/>
    <lineage>
        <taxon>Eukaryota</taxon>
        <taxon>Metazoa</taxon>
        <taxon>Chordata</taxon>
        <taxon>Craniata</taxon>
        <taxon>Vertebrata</taxon>
        <taxon>Euteleostomi</taxon>
        <taxon>Mammalia</taxon>
        <taxon>Eutheria</taxon>
        <taxon>Euarchontoglires</taxon>
        <taxon>Primates</taxon>
        <taxon>Haplorrhini</taxon>
        <taxon>Catarrhini</taxon>
        <taxon>Hominidae</taxon>
        <taxon>Gorilla</taxon>
    </lineage>
</organism>
<comment type="function">
    <text evidence="1">Promotes microtubule assembly and stability, and might be involved in the establishment and maintenance of neuronal polarity. The C-terminus binds axonal microtubules while the N-terminus binds neural plasma membrane components, suggesting that tau functions as a linker protein between both. Axonal polarity is predetermined by tau localization (in the neuronal cell) in the domain of the cell body defined by the centrosome. The short isoforms allow plasticity of the cytoskeleton whereas the longer isoforms may preferentially play a role in its stabilization (By similarity).</text>
</comment>
<comment type="subunit">
    <text evidence="2 3 4">Interacts with MARK1, MARK2, MARK3 and MARK4 (By similarity). Interacts with SQSTM1 when polyubiquitinated (By similarity). Interacts with PSMC2 through SQSTM1 (By similarity). Interacts with FKBP4 (By similarity). Binds to CSNK1D (By similarity). Interacts with SGK1 (By similarity). Interacts with EPM2A; the interaction dephosphorylates MAPT at Ser-396 (By similarity). Interacts with PIN1 (By similarity). Interacts with LRRK2 (By similarity). Interacts with LRP1, leading to endocytosis; this interaction is reduced in the presence of LRPAP1/RAP (By similarity).</text>
</comment>
<comment type="subcellular location">
    <subcellularLocation>
        <location evidence="2">Cytoplasm</location>
        <location evidence="2">Cytosol</location>
    </subcellularLocation>
    <subcellularLocation>
        <location evidence="2">Cell membrane</location>
        <topology evidence="2">Peripheral membrane protein</topology>
        <orientation evidence="2">Cytoplasmic side</orientation>
    </subcellularLocation>
    <subcellularLocation>
        <location evidence="2">Cytoplasm</location>
        <location evidence="2">Cytoskeleton</location>
    </subcellularLocation>
    <subcellularLocation>
        <location evidence="2">Cell projection</location>
        <location evidence="2">Axon</location>
    </subcellularLocation>
    <subcellularLocation>
        <location evidence="2">Cell projection</location>
        <location evidence="2">Dendrite</location>
    </subcellularLocation>
    <text evidence="2">Mostly found in the axons of neurons, in the cytosol and in association with plasma membrane components.</text>
</comment>
<comment type="domain">
    <text evidence="1">The tau/MAP repeat binds to tubulin.</text>
</comment>
<comment type="PTM">
    <text evidence="1">Polyubiquitinated. Requires functional TRAF6 and may provoke SQSTM1-dependent degradation by the proteasome (By similarity).</text>
</comment>
<comment type="PTM">
    <text evidence="1 2">Phosphorylation at various serine and threonine residues in S-P or T-P motifs by proline-directed protein kinases (PDPK1, CDK1, CDK5, GSK3, MAPK) (a few sites per protein in interphase, more in mitosis), and at serine residues in K-X-G-S motifs by MAP/microtubule affinity-regulating kinase (MARK1, MARK2, MARK3 or MARK4), causing detachment from microtubules, and their disassembly (By similarity). Phosphorylation at Ser-597 by BRSK1 and BRSK2 in neurons affects ability to bind microtubules and plays a role in neuron polarization. Phosphorylation at Ser-214 by SGK1 mediates microtubule depolymerization and neurite formation in hippocampal neurons. Phosphorylated by PHK. Dephosphorylation at several serine and threonine residues by the serine/threonine phosphatase PPP5C (By similarity).</text>
</comment>
<sequence length="776" mass="80929">MAEPRQEFEVMEDHAGTYGLGDRKDQGGYTMLQDQEGDTDAGLKESPLQTPTEDGSEEPGSETSDAKSTPTAEDVTAPLVDEGAPGEQAAAQPHTEIPEGTTAEEAGIGDTPSLEDEAAGHVTQEPESGKVVQEGFLREPGPPGLSHQLMSGMPGAPLLPEGPREATRQPSGTGPEDTEGGRHAPELLKHQLLGDLHQEGPPLKGAGGKERPGSKEEVDEDRDVDESSPQDSPPSKASPAQDGRPPQTAAREATSIPGFPAKGAIHLPVDFLSKVSTEIPASEPDGPSAGRAKGQDAPLEFTFHVEITPNVQKEQAHSEEHLGRAAFPGAPGEGPEARGPSLGEDTKEADLPESSEKQPAAAPRGKPVSRVPQLKARMVSKSKDGTGSDDKKAKTSTRSSAKTLKNRPCLSPKHPTPGSSDPLIQPSSPAVCPEPPSSPKYVSSVTPRTGSSGAKEMKLKGADGKTKIATPRGAAPPGQKGQANATRIPAKTPPAPKTPPSSATKQVQRRPPPAGPRSERGEPPKSGDRSGYSSPGSPGTPGSRSRTPSLPTPPTREPKKVAVVRTPPKSPSSAKSRLQTAPVPMPDLKNVKSKIGSTENLKHQPGGGKVQIINKKLDLSNVQSKCGSKDNIKHVPGGGSVQIVYKPVDLSKVTSKCGSLGNIHHKPGGGQVEVKSEKLDFKDRVQSKIGSLDNITHVPGGGNKKIETHKLTFRENAKAKTDHGAEIVYKSPVVSGDTSPRHLSNVSSTGSIDMVDSPQLATLADEVSASLAKQGL</sequence>
<dbReference type="EMBL" id="AY574149">
    <property type="protein sequence ID" value="AAS91774.2"/>
    <property type="molecule type" value="Genomic_DNA"/>
</dbReference>
<dbReference type="EMBL" id="AY574136">
    <property type="protein sequence ID" value="AAS91774.2"/>
    <property type="status" value="JOINED"/>
    <property type="molecule type" value="Genomic_DNA"/>
</dbReference>
<dbReference type="EMBL" id="AY574137">
    <property type="protein sequence ID" value="AAS91774.2"/>
    <property type="status" value="JOINED"/>
    <property type="molecule type" value="Genomic_DNA"/>
</dbReference>
<dbReference type="EMBL" id="AY574138">
    <property type="protein sequence ID" value="AAS91774.2"/>
    <property type="status" value="JOINED"/>
    <property type="molecule type" value="Genomic_DNA"/>
</dbReference>
<dbReference type="EMBL" id="AY574139">
    <property type="protein sequence ID" value="AAS91774.2"/>
    <property type="status" value="JOINED"/>
    <property type="molecule type" value="Genomic_DNA"/>
</dbReference>
<dbReference type="EMBL" id="AY574140">
    <property type="protein sequence ID" value="AAS91774.2"/>
    <property type="status" value="JOINED"/>
    <property type="molecule type" value="Genomic_DNA"/>
</dbReference>
<dbReference type="EMBL" id="AY574141">
    <property type="protein sequence ID" value="AAS91774.2"/>
    <property type="status" value="JOINED"/>
    <property type="molecule type" value="Genomic_DNA"/>
</dbReference>
<dbReference type="EMBL" id="AY574142">
    <property type="protein sequence ID" value="AAS91774.2"/>
    <property type="status" value="JOINED"/>
    <property type="molecule type" value="Genomic_DNA"/>
</dbReference>
<dbReference type="EMBL" id="AY574143">
    <property type="protein sequence ID" value="AAS91774.2"/>
    <property type="status" value="JOINED"/>
    <property type="molecule type" value="Genomic_DNA"/>
</dbReference>
<dbReference type="EMBL" id="AY574144">
    <property type="protein sequence ID" value="AAS91774.2"/>
    <property type="status" value="JOINED"/>
    <property type="molecule type" value="Genomic_DNA"/>
</dbReference>
<dbReference type="EMBL" id="AY574145">
    <property type="protein sequence ID" value="AAS91774.2"/>
    <property type="status" value="JOINED"/>
    <property type="molecule type" value="Genomic_DNA"/>
</dbReference>
<dbReference type="EMBL" id="AY574146">
    <property type="protein sequence ID" value="AAS91774.2"/>
    <property type="status" value="JOINED"/>
    <property type="molecule type" value="Genomic_DNA"/>
</dbReference>
<dbReference type="EMBL" id="AY574147">
    <property type="protein sequence ID" value="AAS91774.2"/>
    <property type="status" value="JOINED"/>
    <property type="molecule type" value="Genomic_DNA"/>
</dbReference>
<dbReference type="EMBL" id="AY574148">
    <property type="protein sequence ID" value="AAS91774.2"/>
    <property type="status" value="JOINED"/>
    <property type="molecule type" value="Genomic_DNA"/>
</dbReference>
<dbReference type="BMRB" id="Q5YCW0"/>
<dbReference type="SMR" id="Q5YCW0"/>
<dbReference type="FunCoup" id="Q5YCW0">
    <property type="interactions" value="496"/>
</dbReference>
<dbReference type="STRING" id="9593.ENSGGOP00000005406"/>
<dbReference type="eggNOG" id="KOG2418">
    <property type="taxonomic scope" value="Eukaryota"/>
</dbReference>
<dbReference type="InParanoid" id="Q5YCW0"/>
<dbReference type="Proteomes" id="UP000001519">
    <property type="component" value="Unplaced"/>
</dbReference>
<dbReference type="GO" id="GO:0030424">
    <property type="term" value="C:axon"/>
    <property type="evidence" value="ECO:0000250"/>
    <property type="project" value="UniProtKB"/>
</dbReference>
<dbReference type="GO" id="GO:0005737">
    <property type="term" value="C:cytoplasm"/>
    <property type="evidence" value="ECO:0000250"/>
    <property type="project" value="UniProtKB"/>
</dbReference>
<dbReference type="GO" id="GO:0005829">
    <property type="term" value="C:cytosol"/>
    <property type="evidence" value="ECO:0007669"/>
    <property type="project" value="UniProtKB-SubCell"/>
</dbReference>
<dbReference type="GO" id="GO:0030425">
    <property type="term" value="C:dendrite"/>
    <property type="evidence" value="ECO:0000250"/>
    <property type="project" value="UniProtKB"/>
</dbReference>
<dbReference type="GO" id="GO:0030426">
    <property type="term" value="C:growth cone"/>
    <property type="evidence" value="ECO:0000250"/>
    <property type="project" value="UniProtKB"/>
</dbReference>
<dbReference type="GO" id="GO:0005874">
    <property type="term" value="C:microtubule"/>
    <property type="evidence" value="ECO:0007669"/>
    <property type="project" value="UniProtKB-KW"/>
</dbReference>
<dbReference type="GO" id="GO:0043005">
    <property type="term" value="C:neuron projection"/>
    <property type="evidence" value="ECO:0000318"/>
    <property type="project" value="GO_Central"/>
</dbReference>
<dbReference type="GO" id="GO:0005886">
    <property type="term" value="C:plasma membrane"/>
    <property type="evidence" value="ECO:0000250"/>
    <property type="project" value="UniProtKB"/>
</dbReference>
<dbReference type="GO" id="GO:0045298">
    <property type="term" value="C:tubulin complex"/>
    <property type="evidence" value="ECO:0000250"/>
    <property type="project" value="UniProtKB"/>
</dbReference>
<dbReference type="GO" id="GO:0008017">
    <property type="term" value="F:microtubule binding"/>
    <property type="evidence" value="ECO:0000250"/>
    <property type="project" value="UniProtKB"/>
</dbReference>
<dbReference type="GO" id="GO:0000226">
    <property type="term" value="P:microtubule cytoskeleton organization"/>
    <property type="evidence" value="ECO:0000250"/>
    <property type="project" value="UniProtKB"/>
</dbReference>
<dbReference type="GO" id="GO:0031175">
    <property type="term" value="P:neuron projection development"/>
    <property type="evidence" value="ECO:0000318"/>
    <property type="project" value="GO_Central"/>
</dbReference>
<dbReference type="GO" id="GO:0045773">
    <property type="term" value="P:positive regulation of axon extension"/>
    <property type="evidence" value="ECO:0000250"/>
    <property type="project" value="UniProtKB"/>
</dbReference>
<dbReference type="GO" id="GO:0031116">
    <property type="term" value="P:positive regulation of microtubule polymerization"/>
    <property type="evidence" value="ECO:0000250"/>
    <property type="project" value="UniProtKB"/>
</dbReference>
<dbReference type="InterPro" id="IPR027324">
    <property type="entry name" value="MAP2/MAP4/Tau"/>
</dbReference>
<dbReference type="InterPro" id="IPR001084">
    <property type="entry name" value="MAP_tubulin-bd_rpt"/>
</dbReference>
<dbReference type="InterPro" id="IPR002955">
    <property type="entry name" value="Tau"/>
</dbReference>
<dbReference type="PANTHER" id="PTHR11501">
    <property type="entry name" value="MICROTUBULE-ASSOCIATED PROTEIN"/>
    <property type="match status" value="1"/>
</dbReference>
<dbReference type="PANTHER" id="PTHR11501:SF14">
    <property type="entry name" value="MICROTUBULE-ASSOCIATED PROTEIN TAU"/>
    <property type="match status" value="1"/>
</dbReference>
<dbReference type="Pfam" id="PF00418">
    <property type="entry name" value="Tubulin-binding"/>
    <property type="match status" value="4"/>
</dbReference>
<dbReference type="PRINTS" id="PR01261">
    <property type="entry name" value="TAUPROTEIN"/>
</dbReference>
<dbReference type="PROSITE" id="PS00229">
    <property type="entry name" value="TAU_MAP_1"/>
    <property type="match status" value="4"/>
</dbReference>
<dbReference type="PROSITE" id="PS51491">
    <property type="entry name" value="TAU_MAP_2"/>
    <property type="match status" value="4"/>
</dbReference>
<accession>Q5YCW0</accession>